<accession>Q9YAH7</accession>
<evidence type="ECO:0000255" key="1">
    <source>
        <dbReference type="HAMAP-Rule" id="MF_00051"/>
    </source>
</evidence>
<evidence type="ECO:0000305" key="2"/>
<protein>
    <recommendedName>
        <fullName evidence="1">Serine hydroxymethyltransferase</fullName>
        <shortName evidence="1">SHMT</shortName>
        <shortName evidence="1">Serine methylase</shortName>
        <ecNumber evidence="1">2.1.2.-</ecNumber>
    </recommendedName>
</protein>
<dbReference type="EC" id="2.1.2.-" evidence="1"/>
<dbReference type="EMBL" id="BA000002">
    <property type="protein sequence ID" value="BAA80972.2"/>
    <property type="molecule type" value="Genomic_DNA"/>
</dbReference>
<dbReference type="PIR" id="D72498">
    <property type="entry name" value="D72498"/>
</dbReference>
<dbReference type="SMR" id="Q9YAH7"/>
<dbReference type="STRING" id="272557.APE_1962.1"/>
<dbReference type="EnsemblBacteria" id="BAA80972">
    <property type="protein sequence ID" value="BAA80972"/>
    <property type="gene ID" value="APE_1962.1"/>
</dbReference>
<dbReference type="KEGG" id="ape:APE_1962.1"/>
<dbReference type="PATRIC" id="fig|272557.25.peg.1308"/>
<dbReference type="eggNOG" id="arCOG00070">
    <property type="taxonomic scope" value="Archaea"/>
</dbReference>
<dbReference type="UniPathway" id="UPA00288">
    <property type="reaction ID" value="UER01023"/>
</dbReference>
<dbReference type="Proteomes" id="UP000002518">
    <property type="component" value="Chromosome"/>
</dbReference>
<dbReference type="GO" id="GO:0005737">
    <property type="term" value="C:cytoplasm"/>
    <property type="evidence" value="ECO:0007669"/>
    <property type="project" value="UniProtKB-SubCell"/>
</dbReference>
<dbReference type="GO" id="GO:0004372">
    <property type="term" value="F:glycine hydroxymethyltransferase activity"/>
    <property type="evidence" value="ECO:0007669"/>
    <property type="project" value="UniProtKB-UniRule"/>
</dbReference>
<dbReference type="GO" id="GO:0030170">
    <property type="term" value="F:pyridoxal phosphate binding"/>
    <property type="evidence" value="ECO:0007669"/>
    <property type="project" value="UniProtKB-UniRule"/>
</dbReference>
<dbReference type="GO" id="GO:0019264">
    <property type="term" value="P:glycine biosynthetic process from serine"/>
    <property type="evidence" value="ECO:0007669"/>
    <property type="project" value="UniProtKB-UniRule"/>
</dbReference>
<dbReference type="GO" id="GO:0035999">
    <property type="term" value="P:tetrahydrofolate interconversion"/>
    <property type="evidence" value="ECO:0007669"/>
    <property type="project" value="InterPro"/>
</dbReference>
<dbReference type="CDD" id="cd00378">
    <property type="entry name" value="SHMT"/>
    <property type="match status" value="1"/>
</dbReference>
<dbReference type="FunFam" id="3.40.640.10:FF:000101">
    <property type="entry name" value="Serine hydroxymethyltransferase"/>
    <property type="match status" value="1"/>
</dbReference>
<dbReference type="FunFam" id="3.90.1150.10:FF:000114">
    <property type="entry name" value="Serine hydroxymethyltransferase"/>
    <property type="match status" value="1"/>
</dbReference>
<dbReference type="Gene3D" id="3.90.1150.10">
    <property type="entry name" value="Aspartate Aminotransferase, domain 1"/>
    <property type="match status" value="1"/>
</dbReference>
<dbReference type="Gene3D" id="3.40.640.10">
    <property type="entry name" value="Type I PLP-dependent aspartate aminotransferase-like (Major domain)"/>
    <property type="match status" value="1"/>
</dbReference>
<dbReference type="InterPro" id="IPR015424">
    <property type="entry name" value="PyrdxlP-dep_Trfase"/>
</dbReference>
<dbReference type="InterPro" id="IPR015421">
    <property type="entry name" value="PyrdxlP-dep_Trfase_major"/>
</dbReference>
<dbReference type="InterPro" id="IPR015422">
    <property type="entry name" value="PyrdxlP-dep_Trfase_small"/>
</dbReference>
<dbReference type="InterPro" id="IPR001085">
    <property type="entry name" value="Ser_HO-MeTrfase"/>
</dbReference>
<dbReference type="InterPro" id="IPR049943">
    <property type="entry name" value="Ser_HO-MeTrfase-like"/>
</dbReference>
<dbReference type="InterPro" id="IPR019798">
    <property type="entry name" value="Ser_HO-MeTrfase_PLP_BS"/>
</dbReference>
<dbReference type="InterPro" id="IPR039429">
    <property type="entry name" value="SHMT-like_dom"/>
</dbReference>
<dbReference type="NCBIfam" id="NF000586">
    <property type="entry name" value="PRK00011.1"/>
    <property type="match status" value="1"/>
</dbReference>
<dbReference type="PANTHER" id="PTHR11680">
    <property type="entry name" value="SERINE HYDROXYMETHYLTRANSFERASE"/>
    <property type="match status" value="1"/>
</dbReference>
<dbReference type="PANTHER" id="PTHR11680:SF35">
    <property type="entry name" value="SERINE HYDROXYMETHYLTRANSFERASE 1"/>
    <property type="match status" value="1"/>
</dbReference>
<dbReference type="Pfam" id="PF00464">
    <property type="entry name" value="SHMT"/>
    <property type="match status" value="1"/>
</dbReference>
<dbReference type="PIRSF" id="PIRSF000412">
    <property type="entry name" value="SHMT"/>
    <property type="match status" value="1"/>
</dbReference>
<dbReference type="SUPFAM" id="SSF53383">
    <property type="entry name" value="PLP-dependent transferases"/>
    <property type="match status" value="1"/>
</dbReference>
<dbReference type="PROSITE" id="PS00096">
    <property type="entry name" value="SHMT"/>
    <property type="match status" value="1"/>
</dbReference>
<comment type="function">
    <text evidence="1">Catalyzes the reversible interconversion of serine and glycine with a modified folate serving as the one-carbon carrier. Also exhibits a pteridine-independent aldolase activity toward beta-hydroxyamino acids, producing glycine and aldehydes, via a retro-aldol mechanism.</text>
</comment>
<comment type="cofactor">
    <cofactor evidence="1">
        <name>pyridoxal 5'-phosphate</name>
        <dbReference type="ChEBI" id="CHEBI:597326"/>
    </cofactor>
</comment>
<comment type="pathway">
    <text evidence="1">Amino-acid biosynthesis; glycine biosynthesis; glycine from L-serine: step 1/1.</text>
</comment>
<comment type="subunit">
    <text evidence="1">Homodimer.</text>
</comment>
<comment type="subcellular location">
    <subcellularLocation>
        <location evidence="1">Cytoplasm</location>
    </subcellularLocation>
</comment>
<comment type="similarity">
    <text evidence="1 2">Belongs to the SHMT family.</text>
</comment>
<proteinExistence type="inferred from homology"/>
<name>GLYA_AERPE</name>
<organism>
    <name type="scientific">Aeropyrum pernix (strain ATCC 700893 / DSM 11879 / JCM 9820 / NBRC 100138 / K1)</name>
    <dbReference type="NCBI Taxonomy" id="272557"/>
    <lineage>
        <taxon>Archaea</taxon>
        <taxon>Thermoproteota</taxon>
        <taxon>Thermoprotei</taxon>
        <taxon>Desulfurococcales</taxon>
        <taxon>Desulfurococcaceae</taxon>
        <taxon>Aeropyrum</taxon>
    </lineage>
</organism>
<reference key="1">
    <citation type="journal article" date="1999" name="DNA Res.">
        <title>Complete genome sequence of an aerobic hyper-thermophilic crenarchaeon, Aeropyrum pernix K1.</title>
        <authorList>
            <person name="Kawarabayasi Y."/>
            <person name="Hino Y."/>
            <person name="Horikawa H."/>
            <person name="Yamazaki S."/>
            <person name="Haikawa Y."/>
            <person name="Jin-no K."/>
            <person name="Takahashi M."/>
            <person name="Sekine M."/>
            <person name="Baba S."/>
            <person name="Ankai A."/>
            <person name="Kosugi H."/>
            <person name="Hosoyama A."/>
            <person name="Fukui S."/>
            <person name="Nagai Y."/>
            <person name="Nishijima K."/>
            <person name="Nakazawa H."/>
            <person name="Takamiya M."/>
            <person name="Masuda S."/>
            <person name="Funahashi T."/>
            <person name="Tanaka T."/>
            <person name="Kudoh Y."/>
            <person name="Yamazaki J."/>
            <person name="Kushida N."/>
            <person name="Oguchi A."/>
            <person name="Aoki K."/>
            <person name="Kubota K."/>
            <person name="Nakamura Y."/>
            <person name="Nomura N."/>
            <person name="Sako Y."/>
            <person name="Kikuchi H."/>
        </authorList>
    </citation>
    <scope>NUCLEOTIDE SEQUENCE [LARGE SCALE GENOMIC DNA]</scope>
    <source>
        <strain>ATCC 700893 / DSM 11879 / JCM 9820 / NBRC 100138 / K1</strain>
    </source>
</reference>
<feature type="chain" id="PRO_0000113708" description="Serine hydroxymethyltransferase">
    <location>
        <begin position="1"/>
        <end position="439"/>
    </location>
</feature>
<feature type="binding site" evidence="1">
    <location>
        <begin position="127"/>
        <end position="129"/>
    </location>
    <ligand>
        <name>(6S)-5,6,7,8-tetrahydrofolate</name>
        <dbReference type="ChEBI" id="CHEBI:57453"/>
    </ligand>
</feature>
<feature type="site" description="Plays an important role in substrate specificity" evidence="1">
    <location>
        <position position="232"/>
    </location>
</feature>
<feature type="modified residue" description="N6-(pyridoxal phosphate)lysine" evidence="1">
    <location>
        <position position="233"/>
    </location>
</feature>
<sequence length="439" mass="48607">MKELDLSDPLSMVLKIAELTTRHNVWRLRESINLIASENVMSLTALKAYLSDFMFRYAEGKPFKRYYQGTRYIDELEVLTGELMGSMMGTNLVELRPVSGTIANASVFRVLAEPGDKAVIAPVQAGAHVSHTKFGTLGALGIEQVSMPYDEENMNVDVDKAVKLIEEVKPRFAVLGGSVYIFPHPTREIAEAIHSVGGKLIYDAAHVLGLIMGGAWPNPLERGADAVTGSTHKTFPGPQGGAVFFRDEQLYKKVSKTIFPWWVSNHHLHRIPATAITAVEMKLYGRDYASQVTSNARKLAEALAAEGLKVIGEHLGYTRSHQVVVDVRDLGGGAKCASLLEESNIIVNKNLLPWDPPEAVKDPSGIRIGVQEVTRLGMKHGEMEEIAKLIRKVLIDKEDPKKVAEQVKEFRKQFMKIHYSLDDKDVRIDTIADILSLAQ</sequence>
<gene>
    <name evidence="1" type="primary">glyA</name>
    <name type="ordered locus">APE_1962.1</name>
</gene>
<keyword id="KW-0028">Amino-acid biosynthesis</keyword>
<keyword id="KW-0963">Cytoplasm</keyword>
<keyword id="KW-0554">One-carbon metabolism</keyword>
<keyword id="KW-0663">Pyridoxal phosphate</keyword>
<keyword id="KW-1185">Reference proteome</keyword>
<keyword id="KW-0808">Transferase</keyword>